<organism>
    <name type="scientific">Homo sapiens</name>
    <name type="common">Human</name>
    <dbReference type="NCBI Taxonomy" id="9606"/>
    <lineage>
        <taxon>Eukaryota</taxon>
        <taxon>Metazoa</taxon>
        <taxon>Chordata</taxon>
        <taxon>Craniata</taxon>
        <taxon>Vertebrata</taxon>
        <taxon>Euteleostomi</taxon>
        <taxon>Mammalia</taxon>
        <taxon>Eutheria</taxon>
        <taxon>Euarchontoglires</taxon>
        <taxon>Primates</taxon>
        <taxon>Haplorrhini</taxon>
        <taxon>Catarrhini</taxon>
        <taxon>Hominidae</taxon>
        <taxon>Homo</taxon>
    </lineage>
</organism>
<gene>
    <name evidence="6" type="primary">WASHC3</name>
    <name type="ORF">AD-016</name>
    <name type="ORF">CCDC53</name>
    <name type="ORF">CGI-116</name>
    <name type="ORF">x0009</name>
</gene>
<keyword id="KW-0007">Acetylation</keyword>
<keyword id="KW-0175">Coiled coil</keyword>
<keyword id="KW-0967">Endosome</keyword>
<keyword id="KW-0653">Protein transport</keyword>
<keyword id="KW-1267">Proteomics identification</keyword>
<keyword id="KW-1185">Reference proteome</keyword>
<keyword id="KW-0813">Transport</keyword>
<sequence length="194" mass="21173">MDEDGLPLMGSGIDLTKVPAIQQKRTVAFLNQFVVHTVQFLNRFSTVCEEKLADLSLRIQQIETTLNILDAKLSSIPGLDDVTVEVSPLNVTSVTNGAHPEATSEQPQQNSTQDSGLQESEVSAENILTVAKDPRYARYLKMVQVGVPVMAIRNKMISEGLDPDLLERPDAPVPDGESEKTVEESSDSESSFSD</sequence>
<accession>Q9Y3C0</accession>
<accession>B2RC74</accession>
<accession>Q53FF0</accession>
<accession>Q6IAI4</accession>
<accession>Q96QK0</accession>
<evidence type="ECO:0000255" key="1"/>
<evidence type="ECO:0000256" key="2">
    <source>
        <dbReference type="SAM" id="MobiDB-lite"/>
    </source>
</evidence>
<evidence type="ECO:0000269" key="3">
    <source>
    </source>
</evidence>
<evidence type="ECO:0000269" key="4">
    <source>
    </source>
</evidence>
<evidence type="ECO:0000305" key="5"/>
<evidence type="ECO:0000312" key="6">
    <source>
        <dbReference type="HGNC" id="HGNC:24256"/>
    </source>
</evidence>
<evidence type="ECO:0007744" key="7">
    <source>
    </source>
</evidence>
<name>WASC3_HUMAN</name>
<reference key="1">
    <citation type="journal article" date="2000" name="Proc. Natl. Acad. Sci. U.S.A.">
        <title>Gene expression profiling in the human hypothalamus-pituitary-adrenal axis and full-length cDNA cloning.</title>
        <authorList>
            <person name="Hu R.-M."/>
            <person name="Han Z.-G."/>
            <person name="Song H.-D."/>
            <person name="Peng Y.-D."/>
            <person name="Huang Q.-H."/>
            <person name="Ren S.-X."/>
            <person name="Gu Y.-J."/>
            <person name="Huang C.-H."/>
            <person name="Li Y.-B."/>
            <person name="Jiang C.-L."/>
            <person name="Fu G."/>
            <person name="Zhang Q.-H."/>
            <person name="Gu B.-W."/>
            <person name="Dai M."/>
            <person name="Mao Y.-F."/>
            <person name="Gao G.-F."/>
            <person name="Rong R."/>
            <person name="Ye M."/>
            <person name="Zhou J."/>
            <person name="Xu S.-H."/>
            <person name="Gu J."/>
            <person name="Shi J.-X."/>
            <person name="Jin W.-R."/>
            <person name="Zhang C.-K."/>
            <person name="Wu T.-M."/>
            <person name="Huang G.-Y."/>
            <person name="Chen Z."/>
            <person name="Chen M.-D."/>
            <person name="Chen J.-L."/>
        </authorList>
    </citation>
    <scope>NUCLEOTIDE SEQUENCE [LARGE SCALE MRNA]</scope>
    <source>
        <tissue>Adrenal gland</tissue>
    </source>
</reference>
<reference key="2">
    <citation type="journal article" date="2000" name="Genome Res.">
        <title>Identification of novel human genes evolutionarily conserved in Caenorhabditis elegans by comparative proteomics.</title>
        <authorList>
            <person name="Lai C.-H."/>
            <person name="Chou C.-Y."/>
            <person name="Ch'ang L.-Y."/>
            <person name="Liu C.-S."/>
            <person name="Lin W.-C."/>
        </authorList>
    </citation>
    <scope>NUCLEOTIDE SEQUENCE [LARGE SCALE MRNA]</scope>
</reference>
<reference key="3">
    <citation type="submission" date="2004-06" db="EMBL/GenBank/DDBJ databases">
        <title>Cloning of human full open reading frames in Gateway(TM) system entry vector (pDONR201).</title>
        <authorList>
            <person name="Ebert L."/>
            <person name="Schick M."/>
            <person name="Neubert P."/>
            <person name="Schatten R."/>
            <person name="Henze S."/>
            <person name="Korn B."/>
        </authorList>
    </citation>
    <scope>NUCLEOTIDE SEQUENCE [LARGE SCALE MRNA]</scope>
</reference>
<reference key="4">
    <citation type="journal article" date="2004" name="Nat. Genet.">
        <title>Complete sequencing and characterization of 21,243 full-length human cDNAs.</title>
        <authorList>
            <person name="Ota T."/>
            <person name="Suzuki Y."/>
            <person name="Nishikawa T."/>
            <person name="Otsuki T."/>
            <person name="Sugiyama T."/>
            <person name="Irie R."/>
            <person name="Wakamatsu A."/>
            <person name="Hayashi K."/>
            <person name="Sato H."/>
            <person name="Nagai K."/>
            <person name="Kimura K."/>
            <person name="Makita H."/>
            <person name="Sekine M."/>
            <person name="Obayashi M."/>
            <person name="Nishi T."/>
            <person name="Shibahara T."/>
            <person name="Tanaka T."/>
            <person name="Ishii S."/>
            <person name="Yamamoto J."/>
            <person name="Saito K."/>
            <person name="Kawai Y."/>
            <person name="Isono Y."/>
            <person name="Nakamura Y."/>
            <person name="Nagahari K."/>
            <person name="Murakami K."/>
            <person name="Yasuda T."/>
            <person name="Iwayanagi T."/>
            <person name="Wagatsuma M."/>
            <person name="Shiratori A."/>
            <person name="Sudo H."/>
            <person name="Hosoiri T."/>
            <person name="Kaku Y."/>
            <person name="Kodaira H."/>
            <person name="Kondo H."/>
            <person name="Sugawara M."/>
            <person name="Takahashi M."/>
            <person name="Kanda K."/>
            <person name="Yokoi T."/>
            <person name="Furuya T."/>
            <person name="Kikkawa E."/>
            <person name="Omura Y."/>
            <person name="Abe K."/>
            <person name="Kamihara K."/>
            <person name="Katsuta N."/>
            <person name="Sato K."/>
            <person name="Tanikawa M."/>
            <person name="Yamazaki M."/>
            <person name="Ninomiya K."/>
            <person name="Ishibashi T."/>
            <person name="Yamashita H."/>
            <person name="Murakawa K."/>
            <person name="Fujimori K."/>
            <person name="Tanai H."/>
            <person name="Kimata M."/>
            <person name="Watanabe M."/>
            <person name="Hiraoka S."/>
            <person name="Chiba Y."/>
            <person name="Ishida S."/>
            <person name="Ono Y."/>
            <person name="Takiguchi S."/>
            <person name="Watanabe S."/>
            <person name="Yosida M."/>
            <person name="Hotuta T."/>
            <person name="Kusano J."/>
            <person name="Kanehori K."/>
            <person name="Takahashi-Fujii A."/>
            <person name="Hara H."/>
            <person name="Tanase T.-O."/>
            <person name="Nomura Y."/>
            <person name="Togiya S."/>
            <person name="Komai F."/>
            <person name="Hara R."/>
            <person name="Takeuchi K."/>
            <person name="Arita M."/>
            <person name="Imose N."/>
            <person name="Musashino K."/>
            <person name="Yuuki H."/>
            <person name="Oshima A."/>
            <person name="Sasaki N."/>
            <person name="Aotsuka S."/>
            <person name="Yoshikawa Y."/>
            <person name="Matsunawa H."/>
            <person name="Ichihara T."/>
            <person name="Shiohata N."/>
            <person name="Sano S."/>
            <person name="Moriya S."/>
            <person name="Momiyama H."/>
            <person name="Satoh N."/>
            <person name="Takami S."/>
            <person name="Terashima Y."/>
            <person name="Suzuki O."/>
            <person name="Nakagawa S."/>
            <person name="Senoh A."/>
            <person name="Mizoguchi H."/>
            <person name="Goto Y."/>
            <person name="Shimizu F."/>
            <person name="Wakebe H."/>
            <person name="Hishigaki H."/>
            <person name="Watanabe T."/>
            <person name="Sugiyama A."/>
            <person name="Takemoto M."/>
            <person name="Kawakami B."/>
            <person name="Yamazaki M."/>
            <person name="Watanabe K."/>
            <person name="Kumagai A."/>
            <person name="Itakura S."/>
            <person name="Fukuzumi Y."/>
            <person name="Fujimori Y."/>
            <person name="Komiyama M."/>
            <person name="Tashiro H."/>
            <person name="Tanigami A."/>
            <person name="Fujiwara T."/>
            <person name="Ono T."/>
            <person name="Yamada K."/>
            <person name="Fujii Y."/>
            <person name="Ozaki K."/>
            <person name="Hirao M."/>
            <person name="Ohmori Y."/>
            <person name="Kawabata A."/>
            <person name="Hikiji T."/>
            <person name="Kobatake N."/>
            <person name="Inagaki H."/>
            <person name="Ikema Y."/>
            <person name="Okamoto S."/>
            <person name="Okitani R."/>
            <person name="Kawakami T."/>
            <person name="Noguchi S."/>
            <person name="Itoh T."/>
            <person name="Shigeta K."/>
            <person name="Senba T."/>
            <person name="Matsumura K."/>
            <person name="Nakajima Y."/>
            <person name="Mizuno T."/>
            <person name="Morinaga M."/>
            <person name="Sasaki M."/>
            <person name="Togashi T."/>
            <person name="Oyama M."/>
            <person name="Hata H."/>
            <person name="Watanabe M."/>
            <person name="Komatsu T."/>
            <person name="Mizushima-Sugano J."/>
            <person name="Satoh T."/>
            <person name="Shirai Y."/>
            <person name="Takahashi Y."/>
            <person name="Nakagawa K."/>
            <person name="Okumura K."/>
            <person name="Nagase T."/>
            <person name="Nomura N."/>
            <person name="Kikuchi H."/>
            <person name="Masuho Y."/>
            <person name="Yamashita R."/>
            <person name="Nakai K."/>
            <person name="Yada T."/>
            <person name="Nakamura Y."/>
            <person name="Ohara O."/>
            <person name="Isogai T."/>
            <person name="Sugano S."/>
        </authorList>
    </citation>
    <scope>NUCLEOTIDE SEQUENCE [LARGE SCALE MRNA]</scope>
    <source>
        <tissue>Placenta</tissue>
    </source>
</reference>
<reference key="5">
    <citation type="submission" date="2005-04" db="EMBL/GenBank/DDBJ databases">
        <authorList>
            <person name="Suzuki Y."/>
            <person name="Sugano S."/>
            <person name="Totoki Y."/>
            <person name="Toyoda A."/>
            <person name="Takeda T."/>
            <person name="Sakaki Y."/>
            <person name="Tanaka A."/>
            <person name="Yokoyama S."/>
        </authorList>
    </citation>
    <scope>NUCLEOTIDE SEQUENCE [LARGE SCALE MRNA]</scope>
    <source>
        <tissue>Testis</tissue>
    </source>
</reference>
<reference key="6">
    <citation type="submission" date="2005-07" db="EMBL/GenBank/DDBJ databases">
        <authorList>
            <person name="Mural R.J."/>
            <person name="Istrail S."/>
            <person name="Sutton G.G."/>
            <person name="Florea L."/>
            <person name="Halpern A.L."/>
            <person name="Mobarry C.M."/>
            <person name="Lippert R."/>
            <person name="Walenz B."/>
            <person name="Shatkay H."/>
            <person name="Dew I."/>
            <person name="Miller J.R."/>
            <person name="Flanigan M.J."/>
            <person name="Edwards N.J."/>
            <person name="Bolanos R."/>
            <person name="Fasulo D."/>
            <person name="Halldorsson B.V."/>
            <person name="Hannenhalli S."/>
            <person name="Turner R."/>
            <person name="Yooseph S."/>
            <person name="Lu F."/>
            <person name="Nusskern D.R."/>
            <person name="Shue B.C."/>
            <person name="Zheng X.H."/>
            <person name="Zhong F."/>
            <person name="Delcher A.L."/>
            <person name="Huson D.H."/>
            <person name="Kravitz S.A."/>
            <person name="Mouchard L."/>
            <person name="Reinert K."/>
            <person name="Remington K.A."/>
            <person name="Clark A.G."/>
            <person name="Waterman M.S."/>
            <person name="Eichler E.E."/>
            <person name="Adams M.D."/>
            <person name="Hunkapiller M.W."/>
            <person name="Myers E.W."/>
            <person name="Venter J.C."/>
        </authorList>
    </citation>
    <scope>NUCLEOTIDE SEQUENCE [LARGE SCALE GENOMIC DNA]</scope>
</reference>
<reference key="7">
    <citation type="journal article" date="2004" name="Genome Res.">
        <title>The status, quality, and expansion of the NIH full-length cDNA project: the Mammalian Gene Collection (MGC).</title>
        <authorList>
            <consortium name="The MGC Project Team"/>
        </authorList>
    </citation>
    <scope>NUCLEOTIDE SEQUENCE [LARGE SCALE MRNA]</scope>
    <source>
        <tissue>Prostate</tissue>
    </source>
</reference>
<reference key="8">
    <citation type="journal article" date="2009" name="Dev. Cell">
        <title>The Arp2/3 activator WASH controls the fission of endosomes through a large multiprotein complex.</title>
        <authorList>
            <person name="Derivery E."/>
            <person name="Sousa C."/>
            <person name="Gautier J.J."/>
            <person name="Lombard B."/>
            <person name="Loew D."/>
            <person name="Gautreau A."/>
        </authorList>
    </citation>
    <scope>FUNCTION OF THE WASH COMPLEX</scope>
    <scope>IDENTIFICATION IN THE WASH COMPLEX</scope>
</reference>
<reference key="9">
    <citation type="journal article" date="2010" name="Proc. Natl. Acad. Sci. U.S.A.">
        <title>WASH and WAVE actin regulators of the Wiskott-Aldrich syndrome protein (WASP) family are controlled by analogous structurally related complexes.</title>
        <authorList>
            <person name="Jia D."/>
            <person name="Gomez T.S."/>
            <person name="Metlagel Z."/>
            <person name="Umetani J."/>
            <person name="Otwinowski Z."/>
            <person name="Rosen M.K."/>
            <person name="Billadeau D.D."/>
        </authorList>
    </citation>
    <scope>IDENTIFICATION IN THE WASH CORE COMPLEX</scope>
    <scope>FUNCTION OF THE WASH CORE COMPLEX</scope>
</reference>
<reference key="10">
    <citation type="journal article" date="2011" name="BMC Syst. Biol.">
        <title>Initial characterization of the human central proteome.</title>
        <authorList>
            <person name="Burkard T.R."/>
            <person name="Planyavsky M."/>
            <person name="Kaupe I."/>
            <person name="Breitwieser F.P."/>
            <person name="Buerckstuemmer T."/>
            <person name="Bennett K.L."/>
            <person name="Superti-Furga G."/>
            <person name="Colinge J."/>
        </authorList>
    </citation>
    <scope>IDENTIFICATION BY MASS SPECTROMETRY [LARGE SCALE ANALYSIS]</scope>
</reference>
<reference key="11">
    <citation type="journal article" date="2012" name="Proc. Natl. Acad. Sci. U.S.A.">
        <title>N-terminal acetylome analyses and functional insights of the N-terminal acetyltransferase NatB.</title>
        <authorList>
            <person name="Van Damme P."/>
            <person name="Lasa M."/>
            <person name="Polevoda B."/>
            <person name="Gazquez C."/>
            <person name="Elosegui-Artola A."/>
            <person name="Kim D.S."/>
            <person name="De Juan-Pardo E."/>
            <person name="Demeyer K."/>
            <person name="Hole K."/>
            <person name="Larrea E."/>
            <person name="Timmerman E."/>
            <person name="Prieto J."/>
            <person name="Arnesen T."/>
            <person name="Sherman F."/>
            <person name="Gevaert K."/>
            <person name="Aldabe R."/>
        </authorList>
    </citation>
    <scope>ACETYLATION [LARGE SCALE ANALYSIS] AT MET-1</scope>
    <scope>IDENTIFICATION BY MASS SPECTROMETRY [LARGE SCALE ANALYSIS]</scope>
</reference>
<reference key="12">
    <citation type="journal article" date="2014" name="J. Proteomics">
        <title>An enzyme assisted RP-RPLC approach for in-depth analysis of human liver phosphoproteome.</title>
        <authorList>
            <person name="Bian Y."/>
            <person name="Song C."/>
            <person name="Cheng K."/>
            <person name="Dong M."/>
            <person name="Wang F."/>
            <person name="Huang J."/>
            <person name="Sun D."/>
            <person name="Wang L."/>
            <person name="Ye M."/>
            <person name="Zou H."/>
        </authorList>
    </citation>
    <scope>IDENTIFICATION BY MASS SPECTROMETRY [LARGE SCALE ANALYSIS]</scope>
    <source>
        <tissue>Liver</tissue>
    </source>
</reference>
<reference key="13">
    <citation type="journal article" date="2015" name="Proteomics">
        <title>N-terminome analysis of the human mitochondrial proteome.</title>
        <authorList>
            <person name="Vaca Jacome A.S."/>
            <person name="Rabilloud T."/>
            <person name="Schaeffer-Reiss C."/>
            <person name="Rompais M."/>
            <person name="Ayoub D."/>
            <person name="Lane L."/>
            <person name="Bairoch A."/>
            <person name="Van Dorsselaer A."/>
            <person name="Carapito C."/>
        </authorList>
    </citation>
    <scope>IDENTIFICATION BY MASS SPECTROMETRY [LARGE SCALE ANALYSIS]</scope>
</reference>
<proteinExistence type="evidence at protein level"/>
<feature type="chain" id="PRO_0000076201" description="WASH complex subunit 3">
    <location>
        <begin position="1"/>
        <end position="194"/>
    </location>
</feature>
<feature type="region of interest" description="Disordered" evidence="2">
    <location>
        <begin position="93"/>
        <end position="121"/>
    </location>
</feature>
<feature type="region of interest" description="Disordered" evidence="2">
    <location>
        <begin position="159"/>
        <end position="194"/>
    </location>
</feature>
<feature type="coiled-coil region" evidence="1">
    <location>
        <begin position="46"/>
        <end position="74"/>
    </location>
</feature>
<feature type="compositionally biased region" description="Polar residues" evidence="2">
    <location>
        <begin position="103"/>
        <end position="121"/>
    </location>
</feature>
<feature type="modified residue" description="N-acetylmethionine" evidence="7">
    <location>
        <position position="1"/>
    </location>
</feature>
<feature type="sequence conflict" description="In Ref. 5; BAD97059." evidence="5" ref="5">
    <original>D</original>
    <variation>G</variation>
    <location>
        <position position="81"/>
    </location>
</feature>
<feature type="sequence conflict" description="In Ref. 7; AAH10889." evidence="5" ref="7">
    <original>N</original>
    <variation>S</variation>
    <location>
        <position position="110"/>
    </location>
</feature>
<dbReference type="EMBL" id="AF155655">
    <property type="protein sequence ID" value="AAF67012.1"/>
    <property type="molecule type" value="mRNA"/>
</dbReference>
<dbReference type="EMBL" id="AF151874">
    <property type="protein sequence ID" value="AAD34111.1"/>
    <property type="molecule type" value="mRNA"/>
</dbReference>
<dbReference type="EMBL" id="CR457171">
    <property type="protein sequence ID" value="CAG33452.1"/>
    <property type="molecule type" value="mRNA"/>
</dbReference>
<dbReference type="EMBL" id="AK223339">
    <property type="protein sequence ID" value="BAD97059.1"/>
    <property type="molecule type" value="mRNA"/>
</dbReference>
<dbReference type="EMBL" id="AK314970">
    <property type="protein sequence ID" value="BAG37471.1"/>
    <property type="molecule type" value="mRNA"/>
</dbReference>
<dbReference type="EMBL" id="CH471054">
    <property type="protein sequence ID" value="EAW97687.1"/>
    <property type="molecule type" value="Genomic_DNA"/>
</dbReference>
<dbReference type="EMBL" id="BC010889">
    <property type="protein sequence ID" value="AAH10889.1"/>
    <property type="molecule type" value="mRNA"/>
</dbReference>
<dbReference type="CCDS" id="CCDS44959.1"/>
<dbReference type="RefSeq" id="NP_057137.1">
    <property type="nucleotide sequence ID" value="NM_016053.4"/>
</dbReference>
<dbReference type="SMR" id="Q9Y3C0"/>
<dbReference type="BioGRID" id="119225">
    <property type="interactions" value="140"/>
</dbReference>
<dbReference type="ComplexPortal" id="CPX-1163">
    <property type="entry name" value="WASH complex, variant WASHC1/WASHC2C"/>
</dbReference>
<dbReference type="ComplexPortal" id="CPX-1168">
    <property type="entry name" value="WASH complex, variant WASH2P/WASHC2C"/>
</dbReference>
<dbReference type="ComplexPortal" id="CPX-1169">
    <property type="entry name" value="WASH complex, variant WASH3P/WASHC2C"/>
</dbReference>
<dbReference type="ComplexPortal" id="CPX-1170">
    <property type="entry name" value="WASH complex, variant WASH4P/WASHC2C"/>
</dbReference>
<dbReference type="ComplexPortal" id="CPX-1171">
    <property type="entry name" value="WASH complex, variant WASH6P/WASHC2C"/>
</dbReference>
<dbReference type="ComplexPortal" id="CPX-1172">
    <property type="entry name" value="WASH complex, variant WASHC1/WASHC2A"/>
</dbReference>
<dbReference type="ComplexPortal" id="CPX-1173">
    <property type="entry name" value="WASH complex, variant WASH2P/WASHC2A"/>
</dbReference>
<dbReference type="ComplexPortal" id="CPX-1174">
    <property type="entry name" value="WASH complex, variant WASH3P/WASHC2A"/>
</dbReference>
<dbReference type="ComplexPortal" id="CPX-1175">
    <property type="entry name" value="WASH complex, variant WASH4P/WASHC2A"/>
</dbReference>
<dbReference type="ComplexPortal" id="CPX-1176">
    <property type="entry name" value="WASH complex, variant WASH6P/WASHC2A"/>
</dbReference>
<dbReference type="CORUM" id="Q9Y3C0"/>
<dbReference type="FunCoup" id="Q9Y3C0">
    <property type="interactions" value="665"/>
</dbReference>
<dbReference type="IntAct" id="Q9Y3C0">
    <property type="interactions" value="129"/>
</dbReference>
<dbReference type="MINT" id="Q9Y3C0"/>
<dbReference type="STRING" id="9606.ENSP00000240079"/>
<dbReference type="TCDB" id="9.A.3.1.2">
    <property type="family name" value="the sorting nexin27 (snx27)-retromer assembly apparatus (retromeraa) family"/>
</dbReference>
<dbReference type="iPTMnet" id="Q9Y3C0"/>
<dbReference type="PhosphoSitePlus" id="Q9Y3C0"/>
<dbReference type="BioMuta" id="WASHC3"/>
<dbReference type="DMDM" id="6831732"/>
<dbReference type="jPOST" id="Q9Y3C0"/>
<dbReference type="MassIVE" id="Q9Y3C0"/>
<dbReference type="PaxDb" id="9606-ENSP00000240079"/>
<dbReference type="PeptideAtlas" id="Q9Y3C0"/>
<dbReference type="ProteomicsDB" id="86009"/>
<dbReference type="Pumba" id="Q9Y3C0"/>
<dbReference type="Antibodypedia" id="49055">
    <property type="antibodies" value="49 antibodies from 15 providers"/>
</dbReference>
<dbReference type="DNASU" id="51019"/>
<dbReference type="Ensembl" id="ENST00000240079.11">
    <property type="protein sequence ID" value="ENSP00000240079.6"/>
    <property type="gene ID" value="ENSG00000120860.11"/>
</dbReference>
<dbReference type="GeneID" id="51019"/>
<dbReference type="KEGG" id="hsa:51019"/>
<dbReference type="MANE-Select" id="ENST00000240079.11">
    <property type="protein sequence ID" value="ENSP00000240079.6"/>
    <property type="RefSeq nucleotide sequence ID" value="NM_016053.4"/>
    <property type="RefSeq protein sequence ID" value="NP_057137.1"/>
</dbReference>
<dbReference type="UCSC" id="uc010svw.3">
    <property type="organism name" value="human"/>
</dbReference>
<dbReference type="AGR" id="HGNC:24256"/>
<dbReference type="CTD" id="51019"/>
<dbReference type="DisGeNET" id="51019"/>
<dbReference type="GeneCards" id="WASHC3"/>
<dbReference type="HGNC" id="HGNC:24256">
    <property type="gene designation" value="WASHC3"/>
</dbReference>
<dbReference type="HPA" id="ENSG00000120860">
    <property type="expression patterns" value="Low tissue specificity"/>
</dbReference>
<dbReference type="MIM" id="619925">
    <property type="type" value="gene"/>
</dbReference>
<dbReference type="neXtProt" id="NX_Q9Y3C0"/>
<dbReference type="OpenTargets" id="ENSG00000120860"/>
<dbReference type="PharmGKB" id="PA142672169"/>
<dbReference type="VEuPathDB" id="HostDB:ENSG00000120860"/>
<dbReference type="eggNOG" id="KOG4496">
    <property type="taxonomic scope" value="Eukaryota"/>
</dbReference>
<dbReference type="GeneTree" id="ENSGT00390000014084"/>
<dbReference type="InParanoid" id="Q9Y3C0"/>
<dbReference type="OMA" id="GCETKFV"/>
<dbReference type="OrthoDB" id="268027at2759"/>
<dbReference type="PAN-GO" id="Q9Y3C0">
    <property type="GO annotations" value="3 GO annotations based on evolutionary models"/>
</dbReference>
<dbReference type="PhylomeDB" id="Q9Y3C0"/>
<dbReference type="TreeFam" id="TF318955"/>
<dbReference type="PathwayCommons" id="Q9Y3C0"/>
<dbReference type="SignaLink" id="Q9Y3C0"/>
<dbReference type="SIGNOR" id="Q9Y3C0"/>
<dbReference type="BioGRID-ORCS" id="51019">
    <property type="hits" value="71 hits in 1130 CRISPR screens"/>
</dbReference>
<dbReference type="ChiTaRS" id="CCDC53">
    <property type="organism name" value="human"/>
</dbReference>
<dbReference type="GeneWiki" id="CCDC53"/>
<dbReference type="GenomeRNAi" id="51019"/>
<dbReference type="Pharos" id="Q9Y3C0">
    <property type="development level" value="Tdark"/>
</dbReference>
<dbReference type="PRO" id="PR:Q9Y3C0"/>
<dbReference type="Proteomes" id="UP000005640">
    <property type="component" value="Chromosome 12"/>
</dbReference>
<dbReference type="RNAct" id="Q9Y3C0">
    <property type="molecule type" value="protein"/>
</dbReference>
<dbReference type="Bgee" id="ENSG00000120860">
    <property type="expression patterns" value="Expressed in left testis and 203 other cell types or tissues"/>
</dbReference>
<dbReference type="ExpressionAtlas" id="Q9Y3C0">
    <property type="expression patterns" value="baseline and differential"/>
</dbReference>
<dbReference type="GO" id="GO:0031901">
    <property type="term" value="C:early endosome membrane"/>
    <property type="evidence" value="ECO:0000303"/>
    <property type="project" value="ComplexPortal"/>
</dbReference>
<dbReference type="GO" id="GO:0071203">
    <property type="term" value="C:WASH complex"/>
    <property type="evidence" value="ECO:0000314"/>
    <property type="project" value="UniProtKB"/>
</dbReference>
<dbReference type="GO" id="GO:0030041">
    <property type="term" value="P:actin filament polymerization"/>
    <property type="evidence" value="ECO:0000318"/>
    <property type="project" value="GO_Central"/>
</dbReference>
<dbReference type="GO" id="GO:0016197">
    <property type="term" value="P:endosomal transport"/>
    <property type="evidence" value="ECO:0000303"/>
    <property type="project" value="ComplexPortal"/>
</dbReference>
<dbReference type="GO" id="GO:0006887">
    <property type="term" value="P:exocytosis"/>
    <property type="evidence" value="ECO:0000318"/>
    <property type="project" value="GO_Central"/>
</dbReference>
<dbReference type="GO" id="GO:0015031">
    <property type="term" value="P:protein transport"/>
    <property type="evidence" value="ECO:0007669"/>
    <property type="project" value="UniProtKB-KW"/>
</dbReference>
<dbReference type="GO" id="GO:0034315">
    <property type="term" value="P:regulation of Arp2/3 complex-mediated actin nucleation"/>
    <property type="evidence" value="ECO:0000303"/>
    <property type="project" value="ComplexPortal"/>
</dbReference>
<dbReference type="FunFam" id="1.20.5.110:FF:000025">
    <property type="entry name" value="Putative WASH complex subunit CCDC53"/>
    <property type="match status" value="1"/>
</dbReference>
<dbReference type="Gene3D" id="1.20.5.110">
    <property type="match status" value="1"/>
</dbReference>
<dbReference type="InterPro" id="IPR019309">
    <property type="entry name" value="WASHC3"/>
</dbReference>
<dbReference type="PANTHER" id="PTHR13015">
    <property type="entry name" value="PROTEIN AD-016-RELATED"/>
    <property type="match status" value="1"/>
</dbReference>
<dbReference type="PANTHER" id="PTHR13015:SF0">
    <property type="entry name" value="WASH COMPLEX SUBUNIT 3"/>
    <property type="match status" value="1"/>
</dbReference>
<dbReference type="Pfam" id="PF10152">
    <property type="entry name" value="CCDC53"/>
    <property type="match status" value="1"/>
</dbReference>
<protein>
    <recommendedName>
        <fullName evidence="6">WASH complex subunit 3</fullName>
    </recommendedName>
    <alternativeName>
        <fullName>Coiled-coil domain-containing protein 53</fullName>
    </alternativeName>
</protein>
<comment type="function">
    <text evidence="3 4">Acts as a component of the WASH core complex that functions as a nucleation-promoting factor (NPF) at the surface of endosomes, where it recruits and activates the Arp2/3 complex to induce actin polymerization, playing a key role in the fission of tubules that serve as transport intermediates during endosome sorting.</text>
</comment>
<comment type="subunit">
    <text evidence="3 4">Component of the WASH core complex also described as WASH regulatory complex (SHRC) composed of WASH (WASHC1, WASH2P or WASH3P), WASHC2 (WASHC2A or WASHC2C), WASHC3, WASHC4 and WASHC5. The WASH core complex associates via WASHC2 with the F-actin-capping protein dimer (formed by CAPZA1, CAPZA2 or CAPZA3 and CAPZB) in a transient or substoichiometric manner which was initially described as WASH complex.</text>
</comment>
<comment type="interaction">
    <interactant intactId="EBI-712969">
        <id>Q9Y3C0</id>
    </interactant>
    <interactant intactId="EBI-743598">
        <id>Q9NYB9</id>
        <label>ABI2</label>
    </interactant>
    <organismsDiffer>false</organismsDiffer>
    <experiments>4</experiments>
</comment>
<comment type="interaction">
    <interactant intactId="EBI-712969">
        <id>Q9Y3C0</id>
    </interactant>
    <interactant intactId="EBI-11096309">
        <id>Q9NYB9-2</id>
        <label>ABI2</label>
    </interactant>
    <organismsDiffer>false</organismsDiffer>
    <experiments>5</experiments>
</comment>
<comment type="interaction">
    <interactant intactId="EBI-712969">
        <id>Q9Y3C0</id>
    </interactant>
    <interactant intactId="EBI-10229433">
        <id>Q13515</id>
        <label>BFSP2</label>
    </interactant>
    <organismsDiffer>false</organismsDiffer>
    <experiments>3</experiments>
</comment>
<comment type="interaction">
    <interactant intactId="EBI-712969">
        <id>Q9Y3C0</id>
    </interactant>
    <interactant intactId="EBI-465872">
        <id>Q6QNY1</id>
        <label>BLOC1S2</label>
    </interactant>
    <organismsDiffer>false</organismsDiffer>
    <experiments>5</experiments>
</comment>
<comment type="interaction">
    <interactant intactId="EBI-712969">
        <id>Q9Y3C0</id>
    </interactant>
    <interactant intactId="EBI-465781">
        <id>Q9UL45</id>
        <label>BLOC1S6</label>
    </interactant>
    <organismsDiffer>false</organismsDiffer>
    <experiments>10</experiments>
</comment>
<comment type="interaction">
    <interactant intactId="EBI-712969">
        <id>Q9Y3C0</id>
    </interactant>
    <interactant intactId="EBI-18396958">
        <id>A1L168</id>
        <label>C20orf202</label>
    </interactant>
    <organismsDiffer>false</organismsDiffer>
    <experiments>3</experiments>
</comment>
<comment type="interaction">
    <interactant intactId="EBI-712969">
        <id>Q9Y3C0</id>
    </interactant>
    <interactant intactId="EBI-750686">
        <id>Q8NCU1</id>
        <label>CCDC197</label>
    </interactant>
    <organismsDiffer>false</organismsDiffer>
    <experiments>7</experiments>
</comment>
<comment type="interaction">
    <interactant intactId="EBI-712969">
        <id>Q9Y3C0</id>
    </interactant>
    <interactant intactId="EBI-10175300">
        <id>Q8TD31-3</id>
        <label>CCHCR1</label>
    </interactant>
    <organismsDiffer>false</organismsDiffer>
    <experiments>6</experiments>
</comment>
<comment type="interaction">
    <interactant intactId="EBI-712969">
        <id>Q9Y3C0</id>
    </interactant>
    <interactant intactId="EBI-6871750">
        <id>Q9BS16</id>
        <label>CENPK</label>
    </interactant>
    <organismsDiffer>false</organismsDiffer>
    <experiments>3</experiments>
</comment>
<comment type="interaction">
    <interactant intactId="EBI-712969">
        <id>Q9Y3C0</id>
    </interactant>
    <interactant intactId="EBI-747776">
        <id>Q53EZ4</id>
        <label>CEP55</label>
    </interactant>
    <organismsDiffer>false</organismsDiffer>
    <experiments>7</experiments>
</comment>
<comment type="interaction">
    <interactant intactId="EBI-712969">
        <id>Q9Y3C0</id>
    </interactant>
    <interactant intactId="EBI-3866319">
        <id>Q9Y2V7</id>
        <label>COG6</label>
    </interactant>
    <organismsDiffer>false</organismsDiffer>
    <experiments>4</experiments>
</comment>
<comment type="interaction">
    <interactant intactId="EBI-712969">
        <id>Q9Y3C0</id>
    </interactant>
    <interactant intactId="EBI-465804">
        <id>Q96EV8</id>
        <label>DTNBP1</label>
    </interactant>
    <organismsDiffer>false</organismsDiffer>
    <experiments>3</experiments>
</comment>
<comment type="interaction">
    <interactant intactId="EBI-712969">
        <id>Q9Y3C0</id>
    </interactant>
    <interactant intactId="EBI-11427343">
        <id>Q9P2W3</id>
        <label>GNG13</label>
    </interactant>
    <organismsDiffer>false</organismsDiffer>
    <experiments>3</experiments>
</comment>
<comment type="interaction">
    <interactant intactId="EBI-712969">
        <id>Q9Y3C0</id>
    </interactant>
    <interactant intactId="EBI-618309">
        <id>Q08379</id>
        <label>GOLGA2</label>
    </interactant>
    <organismsDiffer>false</organismsDiffer>
    <experiments>6</experiments>
</comment>
<comment type="interaction">
    <interactant intactId="EBI-712969">
        <id>Q9Y3C0</id>
    </interactant>
    <interactant intactId="EBI-2514791">
        <id>Q96CS2</id>
        <label>HAUS1</label>
    </interactant>
    <organismsDiffer>false</organismsDiffer>
    <experiments>10</experiments>
</comment>
<comment type="interaction">
    <interactant intactId="EBI-712969">
        <id>Q9Y3C0</id>
    </interactant>
    <interactant intactId="EBI-748664">
        <id>O75506</id>
        <label>HSBP1</label>
    </interactant>
    <organismsDiffer>false</organismsDiffer>
    <experiments>15</experiments>
</comment>
<comment type="interaction">
    <interactant intactId="EBI-712969">
        <id>Q9Y3C0</id>
    </interactant>
    <interactant intactId="EBI-744203">
        <id>Q8IY31</id>
        <label>IFT20</label>
    </interactant>
    <organismsDiffer>false</organismsDiffer>
    <experiments>4</experiments>
</comment>
<comment type="interaction">
    <interactant intactId="EBI-712969">
        <id>Q9Y3C0</id>
    </interactant>
    <interactant intactId="EBI-12190633">
        <id>Q70UQ0-4</id>
        <label>IKBIP</label>
    </interactant>
    <organismsDiffer>false</organismsDiffer>
    <experiments>4</experiments>
</comment>
<comment type="interaction">
    <interactant intactId="EBI-712969">
        <id>Q9Y3C0</id>
    </interactant>
    <interactant intactId="EBI-4311436">
        <id>Q2T9L4</id>
        <label>INSYN1</label>
    </interactant>
    <organismsDiffer>false</organismsDiffer>
    <experiments>4</experiments>
</comment>
<comment type="interaction">
    <interactant intactId="EBI-712969">
        <id>Q9Y3C0</id>
    </interactant>
    <interactant intactId="EBI-710124">
        <id>O60341</id>
        <label>KDM1A</label>
    </interactant>
    <organismsDiffer>false</organismsDiffer>
    <experiments>3</experiments>
</comment>
<comment type="interaction">
    <interactant intactId="EBI-712969">
        <id>Q9Y3C0</id>
    </interactant>
    <interactant intactId="EBI-373334">
        <id>Q9Y448</id>
        <label>KNSTRN</label>
    </interactant>
    <organismsDiffer>false</organismsDiffer>
    <experiments>6</experiments>
</comment>
<comment type="interaction">
    <interactant intactId="EBI-712969">
        <id>Q9Y3C0</id>
    </interactant>
    <interactant intactId="EBI-3044087">
        <id>Q7Z3Y8</id>
        <label>KRT27</label>
    </interactant>
    <organismsDiffer>false</organismsDiffer>
    <experiments>3</experiments>
</comment>
<comment type="interaction">
    <interactant intactId="EBI-712969">
        <id>Q9Y3C0</id>
    </interactant>
    <interactant intactId="EBI-2952676">
        <id>Q3SY84</id>
        <label>KRT71</label>
    </interactant>
    <organismsDiffer>false</organismsDiffer>
    <experiments>3</experiments>
</comment>
<comment type="interaction">
    <interactant intactId="EBI-712969">
        <id>Q9Y3C0</id>
    </interactant>
    <interactant intactId="EBI-2949715">
        <id>O95678</id>
        <label>KRT75</label>
    </interactant>
    <organismsDiffer>false</organismsDiffer>
    <experiments>3</experiments>
</comment>
<comment type="interaction">
    <interactant intactId="EBI-712969">
        <id>Q9Y3C0</id>
    </interactant>
    <interactant intactId="EBI-2865388">
        <id>Q969G2</id>
        <label>LHX4</label>
    </interactant>
    <organismsDiffer>false</organismsDiffer>
    <experiments>3</experiments>
</comment>
<comment type="interaction">
    <interactant intactId="EBI-712969">
        <id>Q9Y3C0</id>
    </interactant>
    <interactant intactId="EBI-2830427">
        <id>Q03252</id>
        <label>LMNB2</label>
    </interactant>
    <organismsDiffer>false</organismsDiffer>
    <experiments>3</experiments>
</comment>
<comment type="interaction">
    <interactant intactId="EBI-712969">
        <id>Q9Y3C0</id>
    </interactant>
    <interactant intactId="EBI-348259">
        <id>Q96EZ8</id>
        <label>MCRS1</label>
    </interactant>
    <organismsDiffer>false</organismsDiffer>
    <experiments>13</experiments>
</comment>
<comment type="interaction">
    <interactant intactId="EBI-712969">
        <id>Q9Y3C0</id>
    </interactant>
    <interactant intactId="EBI-748229">
        <id>Q9H8S9</id>
        <label>MOB1A</label>
    </interactant>
    <organismsDiffer>false</organismsDiffer>
    <experiments>3</experiments>
</comment>
<comment type="interaction">
    <interactant intactId="EBI-712969">
        <id>Q9Y3C0</id>
    </interactant>
    <interactant intactId="EBI-2558745">
        <id>Q7L9L4</id>
        <label>MOB1B</label>
    </interactant>
    <organismsDiffer>false</organismsDiffer>
    <experiments>3</experiments>
</comment>
<comment type="interaction">
    <interactant intactId="EBI-712969">
        <id>Q9Y3C0</id>
    </interactant>
    <interactant intactId="EBI-744402">
        <id>Q9NP98</id>
        <label>MYOZ1</label>
    </interactant>
    <organismsDiffer>false</organismsDiffer>
    <experiments>3</experiments>
</comment>
<comment type="interaction">
    <interactant intactId="EBI-712969">
        <id>Q9Y3C0</id>
    </interactant>
    <interactant intactId="EBI-715849">
        <id>O14777</id>
        <label>NDC80</label>
    </interactant>
    <organismsDiffer>false</organismsDiffer>
    <experiments>10</experiments>
</comment>
<comment type="interaction">
    <interactant intactId="EBI-712969">
        <id>Q9Y3C0</id>
    </interactant>
    <interactant intactId="EBI-347978">
        <id>P37198</id>
        <label>NUP62</label>
    </interactant>
    <organismsDiffer>false</organismsDiffer>
    <experiments>9</experiments>
</comment>
<comment type="interaction">
    <interactant intactId="EBI-712969">
        <id>Q9Y3C0</id>
    </interactant>
    <interactant intactId="EBI-748974">
        <id>Q96CV9</id>
        <label>OPTN</label>
    </interactant>
    <organismsDiffer>false</organismsDiffer>
    <experiments>17</experiments>
</comment>
<comment type="interaction">
    <interactant intactId="EBI-712969">
        <id>Q9Y3C0</id>
    </interactant>
    <interactant intactId="EBI-747278">
        <id>P26367</id>
        <label>PAX6</label>
    </interactant>
    <organismsDiffer>false</organismsDiffer>
    <experiments>3</experiments>
</comment>
<comment type="interaction">
    <interactant intactId="EBI-712969">
        <id>Q9Y3C0</id>
    </interactant>
    <interactant intactId="EBI-740845">
        <id>Q96AQ6</id>
        <label>PBXIP1</label>
    </interactant>
    <organismsDiffer>false</organismsDiffer>
    <experiments>4</experiments>
</comment>
<comment type="interaction">
    <interactant intactId="EBI-712969">
        <id>Q9Y3C0</id>
    </interactant>
    <interactant intactId="EBI-741421">
        <id>Q15154</id>
        <label>PCM1</label>
    </interactant>
    <organismsDiffer>false</organismsDiffer>
    <experiments>5</experiments>
</comment>
<comment type="interaction">
    <interactant intactId="EBI-712969">
        <id>Q9Y3C0</id>
    </interactant>
    <interactant intactId="EBI-11742977">
        <id>Q15154-3</id>
        <label>PCM1</label>
    </interactant>
    <organismsDiffer>false</organismsDiffer>
    <experiments>3</experiments>
</comment>
<comment type="interaction">
    <interactant intactId="EBI-712969">
        <id>Q9Y3C0</id>
    </interactant>
    <interactant intactId="EBI-448369">
        <id>Q96FA3</id>
        <label>PELI1</label>
    </interactant>
    <organismsDiffer>false</organismsDiffer>
    <experiments>3</experiments>
</comment>
<comment type="interaction">
    <interactant intactId="EBI-712969">
        <id>Q9Y3C0</id>
    </interactant>
    <interactant intactId="EBI-2861380">
        <id>Q8TCD6</id>
        <label>PHOSPHO2</label>
    </interactant>
    <organismsDiffer>false</organismsDiffer>
    <experiments>5</experiments>
</comment>
<comment type="interaction">
    <interactant intactId="EBI-712969">
        <id>Q9Y3C0</id>
    </interactant>
    <interactant intactId="EBI-447043">
        <id>Q15276</id>
        <label>RABEP1</label>
    </interactant>
    <organismsDiffer>false</organismsDiffer>
    <experiments>3</experiments>
</comment>
<comment type="interaction">
    <interactant intactId="EBI-712969">
        <id>Q9Y3C0</id>
    </interactant>
    <interactant intactId="EBI-373337">
        <id>O76064</id>
        <label>RNF8</label>
    </interactant>
    <organismsDiffer>false</organismsDiffer>
    <experiments>3</experiments>
</comment>
<comment type="interaction">
    <interactant intactId="EBI-712969">
        <id>Q9Y3C0</id>
    </interactant>
    <interactant intactId="EBI-12823227">
        <id>Q6ZMJ2-2</id>
        <label>SCARA5</label>
    </interactant>
    <organismsDiffer>false</organismsDiffer>
    <experiments>3</experiments>
</comment>
<comment type="interaction">
    <interactant intactId="EBI-712969">
        <id>Q9Y3C0</id>
    </interactant>
    <interactant intactId="EBI-727004">
        <id>O00560</id>
        <label>SDCBP</label>
    </interactant>
    <organismsDiffer>false</organismsDiffer>
    <experiments>6</experiments>
</comment>
<comment type="interaction">
    <interactant intactId="EBI-712969">
        <id>Q9Y3C0</id>
    </interactant>
    <interactant intactId="EBI-296723">
        <id>O95295</id>
        <label>SNAPIN</label>
    </interactant>
    <organismsDiffer>false</organismsDiffer>
    <experiments>3</experiments>
</comment>
<comment type="interaction">
    <interactant intactId="EBI-712969">
        <id>Q9Y3C0</id>
    </interactant>
    <interactant intactId="EBI-17766455">
        <id>A0A286YEY3</id>
        <label>SRGAP2B</label>
    </interactant>
    <organismsDiffer>false</organismsDiffer>
    <experiments>3</experiments>
</comment>
<comment type="interaction">
    <interactant intactId="EBI-712969">
        <id>Q9Y3C0</id>
    </interactant>
    <interactant intactId="EBI-6872807">
        <id>Q8N0S2</id>
        <label>SYCE1</label>
    </interactant>
    <organismsDiffer>false</organismsDiffer>
    <experiments>4</experiments>
</comment>
<comment type="interaction">
    <interactant intactId="EBI-712969">
        <id>Q9Y3C0</id>
    </interactant>
    <interactant intactId="EBI-12833746">
        <id>Q5T0J7-2</id>
        <label>TEX35</label>
    </interactant>
    <organismsDiffer>false</organismsDiffer>
    <experiments>3</experiments>
</comment>
<comment type="interaction">
    <interactant intactId="EBI-712969">
        <id>Q9Y3C0</id>
    </interactant>
    <interactant intactId="EBI-1105213">
        <id>Q9UBB9</id>
        <label>TFIP11</label>
    </interactant>
    <organismsDiffer>false</organismsDiffer>
    <experiments>3</experiments>
</comment>
<comment type="interaction">
    <interactant intactId="EBI-712969">
        <id>Q9Y3C0</id>
    </interactant>
    <interactant intactId="EBI-359793">
        <id>P40222</id>
        <label>TXLNA</label>
    </interactant>
    <organismsDiffer>false</organismsDiffer>
    <experiments>8</experiments>
</comment>
<comment type="interaction">
    <interactant intactId="EBI-712969">
        <id>Q9Y3C0</id>
    </interactant>
    <interactant intactId="EBI-6116822">
        <id>Q8N3L3</id>
        <label>TXLNB</label>
    </interactant>
    <organismsDiffer>false</organismsDiffer>
    <experiments>4</experiments>
</comment>
<comment type="interaction">
    <interactant intactId="EBI-712969">
        <id>Q9Y3C0</id>
    </interactant>
    <interactant intactId="EBI-2799833">
        <id>Q8N1B4</id>
        <label>VPS52</label>
    </interactant>
    <organismsDiffer>false</organismsDiffer>
    <experiments>3</experiments>
</comment>
<comment type="interaction">
    <interactant intactId="EBI-712969">
        <id>Q9Y3C0</id>
    </interactant>
    <interactant intactId="EBI-9977437">
        <id>A8K2R3</id>
    </interactant>
    <organismsDiffer>false</organismsDiffer>
    <experiments>3</experiments>
</comment>
<comment type="subcellular location">
    <subcellularLocation>
        <location evidence="5">Early endosome</location>
    </subcellularLocation>
</comment>
<comment type="similarity">
    <text evidence="5">Belongs to the CCDC53 family.</text>
</comment>
<comment type="caution">
    <text evidence="3 4">One study reported a nucleation-promoting factor (NPF) activity towards the Arp2/3 complex using partially purified samples of the WASH complex (PubMed:19922875). In another study, the in vitro reconstituted and purified recombinant WASH core complex, consisting of WASHC3, WASHC4, WASHC5, WASHC1 and the N-terminal residues 1-356 of WASHC2, did not show activity toward Arp2/3 complex (PubMed:20498093).</text>
</comment>